<reference key="1">
    <citation type="journal article" date="2009" name="PLoS Genet.">
        <title>Organised genome dynamics in the Escherichia coli species results in highly diverse adaptive paths.</title>
        <authorList>
            <person name="Touchon M."/>
            <person name="Hoede C."/>
            <person name="Tenaillon O."/>
            <person name="Barbe V."/>
            <person name="Baeriswyl S."/>
            <person name="Bidet P."/>
            <person name="Bingen E."/>
            <person name="Bonacorsi S."/>
            <person name="Bouchier C."/>
            <person name="Bouvet O."/>
            <person name="Calteau A."/>
            <person name="Chiapello H."/>
            <person name="Clermont O."/>
            <person name="Cruveiller S."/>
            <person name="Danchin A."/>
            <person name="Diard M."/>
            <person name="Dossat C."/>
            <person name="Karoui M.E."/>
            <person name="Frapy E."/>
            <person name="Garry L."/>
            <person name="Ghigo J.M."/>
            <person name="Gilles A.M."/>
            <person name="Johnson J."/>
            <person name="Le Bouguenec C."/>
            <person name="Lescat M."/>
            <person name="Mangenot S."/>
            <person name="Martinez-Jehanne V."/>
            <person name="Matic I."/>
            <person name="Nassif X."/>
            <person name="Oztas S."/>
            <person name="Petit M.A."/>
            <person name="Pichon C."/>
            <person name="Rouy Z."/>
            <person name="Ruf C.S."/>
            <person name="Schneider D."/>
            <person name="Tourret J."/>
            <person name="Vacherie B."/>
            <person name="Vallenet D."/>
            <person name="Medigue C."/>
            <person name="Rocha E.P.C."/>
            <person name="Denamur E."/>
        </authorList>
    </citation>
    <scope>NUCLEOTIDE SEQUENCE [LARGE SCALE GENOMIC DNA]</scope>
    <source>
        <strain>IAI1</strain>
    </source>
</reference>
<accession>B7M1F6</accession>
<gene>
    <name evidence="1" type="primary">astE</name>
    <name type="ordered locus">ECIAI1_1805</name>
</gene>
<protein>
    <recommendedName>
        <fullName evidence="1">Succinylglutamate desuccinylase</fullName>
        <ecNumber evidence="1">3.5.1.96</ecNumber>
    </recommendedName>
</protein>
<dbReference type="EC" id="3.5.1.96" evidence="1"/>
<dbReference type="EMBL" id="CU928160">
    <property type="protein sequence ID" value="CAQ98661.1"/>
    <property type="molecule type" value="Genomic_DNA"/>
</dbReference>
<dbReference type="RefSeq" id="WP_000368506.1">
    <property type="nucleotide sequence ID" value="NC_011741.1"/>
</dbReference>
<dbReference type="SMR" id="B7M1F6"/>
<dbReference type="KEGG" id="ecr:ECIAI1_1805"/>
<dbReference type="HOGENOM" id="CLU_071608_0_0_6"/>
<dbReference type="UniPathway" id="UPA00185">
    <property type="reaction ID" value="UER00283"/>
</dbReference>
<dbReference type="GO" id="GO:0016788">
    <property type="term" value="F:hydrolase activity, acting on ester bonds"/>
    <property type="evidence" value="ECO:0007669"/>
    <property type="project" value="UniProtKB-UniRule"/>
</dbReference>
<dbReference type="GO" id="GO:0009017">
    <property type="term" value="F:succinylglutamate desuccinylase activity"/>
    <property type="evidence" value="ECO:0007669"/>
    <property type="project" value="UniProtKB-EC"/>
</dbReference>
<dbReference type="GO" id="GO:0008270">
    <property type="term" value="F:zinc ion binding"/>
    <property type="evidence" value="ECO:0007669"/>
    <property type="project" value="UniProtKB-UniRule"/>
</dbReference>
<dbReference type="GO" id="GO:0019544">
    <property type="term" value="P:arginine catabolic process to glutamate"/>
    <property type="evidence" value="ECO:0007669"/>
    <property type="project" value="UniProtKB-UniRule"/>
</dbReference>
<dbReference type="GO" id="GO:0019545">
    <property type="term" value="P:arginine catabolic process to succinate"/>
    <property type="evidence" value="ECO:0007669"/>
    <property type="project" value="UniProtKB-UniRule"/>
</dbReference>
<dbReference type="CDD" id="cd03855">
    <property type="entry name" value="M14_ASTE"/>
    <property type="match status" value="1"/>
</dbReference>
<dbReference type="FunFam" id="3.40.630.10:FF:000017">
    <property type="entry name" value="Succinylglutamate desuccinylase"/>
    <property type="match status" value="1"/>
</dbReference>
<dbReference type="Gene3D" id="3.40.630.10">
    <property type="entry name" value="Zn peptidases"/>
    <property type="match status" value="1"/>
</dbReference>
<dbReference type="HAMAP" id="MF_00767">
    <property type="entry name" value="Arg_catab_AstE"/>
    <property type="match status" value="1"/>
</dbReference>
<dbReference type="InterPro" id="IPR050178">
    <property type="entry name" value="AspA/AstE_fam"/>
</dbReference>
<dbReference type="InterPro" id="IPR055438">
    <property type="entry name" value="AstE_AspA_cat"/>
</dbReference>
<dbReference type="InterPro" id="IPR007036">
    <property type="entry name" value="Aste_AspA_hybrid_dom"/>
</dbReference>
<dbReference type="InterPro" id="IPR016681">
    <property type="entry name" value="SuccinylGlu_desuccinylase"/>
</dbReference>
<dbReference type="NCBIfam" id="TIGR03242">
    <property type="entry name" value="arg_catab_astE"/>
    <property type="match status" value="1"/>
</dbReference>
<dbReference type="NCBIfam" id="NF003706">
    <property type="entry name" value="PRK05324.1"/>
    <property type="match status" value="1"/>
</dbReference>
<dbReference type="PANTHER" id="PTHR15162">
    <property type="entry name" value="ASPARTOACYLASE"/>
    <property type="match status" value="1"/>
</dbReference>
<dbReference type="PANTHER" id="PTHR15162:SF7">
    <property type="entry name" value="SUCCINYLGLUTAMATE DESUCCINYLASE"/>
    <property type="match status" value="1"/>
</dbReference>
<dbReference type="Pfam" id="PF24827">
    <property type="entry name" value="AstE_AspA_cat"/>
    <property type="match status" value="1"/>
</dbReference>
<dbReference type="Pfam" id="PF04952">
    <property type="entry name" value="AstE_AspA_hybrid"/>
    <property type="match status" value="1"/>
</dbReference>
<dbReference type="PIRSF" id="PIRSF017020">
    <property type="entry name" value="AstE"/>
    <property type="match status" value="1"/>
</dbReference>
<dbReference type="SUPFAM" id="SSF53187">
    <property type="entry name" value="Zn-dependent exopeptidases"/>
    <property type="match status" value="1"/>
</dbReference>
<comment type="function">
    <text evidence="1">Transforms N(2)-succinylglutamate into succinate and glutamate.</text>
</comment>
<comment type="catalytic activity">
    <reaction evidence="1">
        <text>N-succinyl-L-glutamate + H2O = L-glutamate + succinate</text>
        <dbReference type="Rhea" id="RHEA:15169"/>
        <dbReference type="ChEBI" id="CHEBI:15377"/>
        <dbReference type="ChEBI" id="CHEBI:29985"/>
        <dbReference type="ChEBI" id="CHEBI:30031"/>
        <dbReference type="ChEBI" id="CHEBI:58763"/>
        <dbReference type="EC" id="3.5.1.96"/>
    </reaction>
</comment>
<comment type="cofactor">
    <cofactor evidence="1">
        <name>Zn(2+)</name>
        <dbReference type="ChEBI" id="CHEBI:29105"/>
    </cofactor>
    <text evidence="1">Binds 1 zinc ion per subunit.</text>
</comment>
<comment type="pathway">
    <text evidence="1">Amino-acid degradation; L-arginine degradation via AST pathway; L-glutamate and succinate from L-arginine: step 5/5.</text>
</comment>
<comment type="similarity">
    <text evidence="1">Belongs to the AspA/AstE family. Succinylglutamate desuccinylase subfamily.</text>
</comment>
<evidence type="ECO:0000255" key="1">
    <source>
        <dbReference type="HAMAP-Rule" id="MF_00767"/>
    </source>
</evidence>
<organism>
    <name type="scientific">Escherichia coli O8 (strain IAI1)</name>
    <dbReference type="NCBI Taxonomy" id="585034"/>
    <lineage>
        <taxon>Bacteria</taxon>
        <taxon>Pseudomonadati</taxon>
        <taxon>Pseudomonadota</taxon>
        <taxon>Gammaproteobacteria</taxon>
        <taxon>Enterobacterales</taxon>
        <taxon>Enterobacteriaceae</taxon>
        <taxon>Escherichia</taxon>
    </lineage>
</organism>
<name>ASTE_ECO8A</name>
<sequence>MDNFLALTLTGKKPVITEREINGVRWRWLGDGVLELTPLTPPQGALVISAGIHGNETAPVEMLDALLGAISHGEIPLRWRLLVILGNPPALKQGKRYCHSDMNRMFGGRWQLFAESGETCRARELEQCLEDFYDQGKESVRWHLDLHTAIRGSLHPQFGVLPQRDIPWDEKFLTWLGAAGLEALVFHQEPGGTFTHFSARHFGALACTLELGKALPFGQNDLRQFAVTASAIAALLSGESVGIVRTPPLRYRVVSQITRHSPSFEMHMASDTLNFMPFEKGTLLAQDGEERFTVTHDVEYVLFPNPLVALGLRAGLMLEKIS</sequence>
<keyword id="KW-0056">Arginine metabolism</keyword>
<keyword id="KW-0378">Hydrolase</keyword>
<keyword id="KW-0479">Metal-binding</keyword>
<keyword id="KW-0862">Zinc</keyword>
<feature type="chain" id="PRO_1000133629" description="Succinylglutamate desuccinylase">
    <location>
        <begin position="1"/>
        <end position="322"/>
    </location>
</feature>
<feature type="active site" evidence="1">
    <location>
        <position position="210"/>
    </location>
</feature>
<feature type="binding site" evidence="1">
    <location>
        <position position="53"/>
    </location>
    <ligand>
        <name>Zn(2+)</name>
        <dbReference type="ChEBI" id="CHEBI:29105"/>
    </ligand>
</feature>
<feature type="binding site" evidence="1">
    <location>
        <position position="56"/>
    </location>
    <ligand>
        <name>Zn(2+)</name>
        <dbReference type="ChEBI" id="CHEBI:29105"/>
    </ligand>
</feature>
<feature type="binding site" evidence="1">
    <location>
        <position position="147"/>
    </location>
    <ligand>
        <name>Zn(2+)</name>
        <dbReference type="ChEBI" id="CHEBI:29105"/>
    </ligand>
</feature>
<proteinExistence type="inferred from homology"/>